<reference key="1">
    <citation type="submission" date="2008-06" db="EMBL/GenBank/DDBJ databases">
        <title>Complete sequence of Pelodictyon phaeoclathratiforme BU-1.</title>
        <authorList>
            <consortium name="US DOE Joint Genome Institute"/>
            <person name="Lucas S."/>
            <person name="Copeland A."/>
            <person name="Lapidus A."/>
            <person name="Glavina del Rio T."/>
            <person name="Dalin E."/>
            <person name="Tice H."/>
            <person name="Bruce D."/>
            <person name="Goodwin L."/>
            <person name="Pitluck S."/>
            <person name="Schmutz J."/>
            <person name="Larimer F."/>
            <person name="Land M."/>
            <person name="Hauser L."/>
            <person name="Kyrpides N."/>
            <person name="Mikhailova N."/>
            <person name="Liu Z."/>
            <person name="Li T."/>
            <person name="Zhao F."/>
            <person name="Overmann J."/>
            <person name="Bryant D.A."/>
            <person name="Richardson P."/>
        </authorList>
    </citation>
    <scope>NUCLEOTIDE SEQUENCE [LARGE SCALE GENOMIC DNA]</scope>
    <source>
        <strain>DSM 5477 / BU-1</strain>
    </source>
</reference>
<gene>
    <name evidence="1" type="primary">atpH</name>
    <name type="ordered locus">Ppha_2882</name>
</gene>
<sequence>MSTLIASRRYASALLSAAEEGNFLNQIVDELHVIKEVLEHSRDLVYALRSPLVKGDRKIHILEEIFKDSVGEKMFLFLRLVAHKKRAGLLPEIIDEFQILLDEKRGVINVDITSATALSDEQTAELVTKLAAFTGKEIRPRMAINEQFIGGVAVKIGDTIYDGSISHQLQMLRKSLVS</sequence>
<proteinExistence type="inferred from homology"/>
<dbReference type="EMBL" id="CP001110">
    <property type="protein sequence ID" value="ACF45025.1"/>
    <property type="molecule type" value="Genomic_DNA"/>
</dbReference>
<dbReference type="RefSeq" id="WP_012509493.1">
    <property type="nucleotide sequence ID" value="NC_011060.1"/>
</dbReference>
<dbReference type="SMR" id="B4SH37"/>
<dbReference type="STRING" id="324925.Ppha_2882"/>
<dbReference type="KEGG" id="pph:Ppha_2882"/>
<dbReference type="eggNOG" id="COG0712">
    <property type="taxonomic scope" value="Bacteria"/>
</dbReference>
<dbReference type="HOGENOM" id="CLU_085114_4_0_10"/>
<dbReference type="OrthoDB" id="9802471at2"/>
<dbReference type="Proteomes" id="UP000002724">
    <property type="component" value="Chromosome"/>
</dbReference>
<dbReference type="GO" id="GO:0005886">
    <property type="term" value="C:plasma membrane"/>
    <property type="evidence" value="ECO:0007669"/>
    <property type="project" value="UniProtKB-SubCell"/>
</dbReference>
<dbReference type="GO" id="GO:0045259">
    <property type="term" value="C:proton-transporting ATP synthase complex"/>
    <property type="evidence" value="ECO:0007669"/>
    <property type="project" value="UniProtKB-KW"/>
</dbReference>
<dbReference type="GO" id="GO:0046933">
    <property type="term" value="F:proton-transporting ATP synthase activity, rotational mechanism"/>
    <property type="evidence" value="ECO:0007669"/>
    <property type="project" value="UniProtKB-UniRule"/>
</dbReference>
<dbReference type="Gene3D" id="1.10.520.20">
    <property type="entry name" value="N-terminal domain of the delta subunit of the F1F0-ATP synthase"/>
    <property type="match status" value="1"/>
</dbReference>
<dbReference type="HAMAP" id="MF_01416">
    <property type="entry name" value="ATP_synth_delta_bact"/>
    <property type="match status" value="1"/>
</dbReference>
<dbReference type="InterPro" id="IPR026015">
    <property type="entry name" value="ATP_synth_OSCP/delta_N_sf"/>
</dbReference>
<dbReference type="InterPro" id="IPR000711">
    <property type="entry name" value="ATPase_OSCP/dsu"/>
</dbReference>
<dbReference type="NCBIfam" id="TIGR01145">
    <property type="entry name" value="ATP_synt_delta"/>
    <property type="match status" value="1"/>
</dbReference>
<dbReference type="PANTHER" id="PTHR11910">
    <property type="entry name" value="ATP SYNTHASE DELTA CHAIN"/>
    <property type="match status" value="1"/>
</dbReference>
<dbReference type="Pfam" id="PF00213">
    <property type="entry name" value="OSCP"/>
    <property type="match status" value="1"/>
</dbReference>
<dbReference type="PRINTS" id="PR00125">
    <property type="entry name" value="ATPASEDELTA"/>
</dbReference>
<dbReference type="SUPFAM" id="SSF47928">
    <property type="entry name" value="N-terminal domain of the delta subunit of the F1F0-ATP synthase"/>
    <property type="match status" value="1"/>
</dbReference>
<evidence type="ECO:0000255" key="1">
    <source>
        <dbReference type="HAMAP-Rule" id="MF_01416"/>
    </source>
</evidence>
<feature type="chain" id="PRO_0000371051" description="ATP synthase subunit delta">
    <location>
        <begin position="1"/>
        <end position="178"/>
    </location>
</feature>
<organism>
    <name type="scientific">Pelodictyon phaeoclathratiforme (strain DSM 5477 / BU-1)</name>
    <dbReference type="NCBI Taxonomy" id="324925"/>
    <lineage>
        <taxon>Bacteria</taxon>
        <taxon>Pseudomonadati</taxon>
        <taxon>Chlorobiota</taxon>
        <taxon>Chlorobiia</taxon>
        <taxon>Chlorobiales</taxon>
        <taxon>Chlorobiaceae</taxon>
        <taxon>Chlorobium/Pelodictyon group</taxon>
        <taxon>Pelodictyon</taxon>
    </lineage>
</organism>
<name>ATPD_PELPB</name>
<accession>B4SH37</accession>
<keyword id="KW-0066">ATP synthesis</keyword>
<keyword id="KW-0997">Cell inner membrane</keyword>
<keyword id="KW-1003">Cell membrane</keyword>
<keyword id="KW-0139">CF(1)</keyword>
<keyword id="KW-0375">Hydrogen ion transport</keyword>
<keyword id="KW-0406">Ion transport</keyword>
<keyword id="KW-0472">Membrane</keyword>
<keyword id="KW-1185">Reference proteome</keyword>
<keyword id="KW-0813">Transport</keyword>
<protein>
    <recommendedName>
        <fullName evidence="1">ATP synthase subunit delta</fullName>
    </recommendedName>
    <alternativeName>
        <fullName evidence="1">ATP synthase F(1) sector subunit delta</fullName>
    </alternativeName>
    <alternativeName>
        <fullName evidence="1">F-type ATPase subunit delta</fullName>
        <shortName evidence="1">F-ATPase subunit delta</shortName>
    </alternativeName>
</protein>
<comment type="function">
    <text evidence="1">F(1)F(0) ATP synthase produces ATP from ADP in the presence of a proton or sodium gradient. F-type ATPases consist of two structural domains, F(1) containing the extramembraneous catalytic core and F(0) containing the membrane proton channel, linked together by a central stalk and a peripheral stalk. During catalysis, ATP synthesis in the catalytic domain of F(1) is coupled via a rotary mechanism of the central stalk subunits to proton translocation.</text>
</comment>
<comment type="function">
    <text evidence="1">This protein is part of the stalk that links CF(0) to CF(1). It either transmits conformational changes from CF(0) to CF(1) or is implicated in proton conduction.</text>
</comment>
<comment type="subunit">
    <text evidence="1">F-type ATPases have 2 components, F(1) - the catalytic core - and F(0) - the membrane proton channel. F(1) has five subunits: alpha(3), beta(3), gamma(1), delta(1), epsilon(1). F(0) has three main subunits: a(1), b(2) and c(10-14). The alpha and beta chains form an alternating ring which encloses part of the gamma chain. F(1) is attached to F(0) by a central stalk formed by the gamma and epsilon chains, while a peripheral stalk is formed by the delta and b chains.</text>
</comment>
<comment type="subcellular location">
    <subcellularLocation>
        <location evidence="1">Cell inner membrane</location>
        <topology evidence="1">Peripheral membrane protein</topology>
    </subcellularLocation>
</comment>
<comment type="similarity">
    <text evidence="1">Belongs to the ATPase delta chain family.</text>
</comment>